<organism>
    <name type="scientific">Schizosaccharomyces pombe (strain 972 / ATCC 24843)</name>
    <name type="common">Fission yeast</name>
    <dbReference type="NCBI Taxonomy" id="284812"/>
    <lineage>
        <taxon>Eukaryota</taxon>
        <taxon>Fungi</taxon>
        <taxon>Dikarya</taxon>
        <taxon>Ascomycota</taxon>
        <taxon>Taphrinomycotina</taxon>
        <taxon>Schizosaccharomycetes</taxon>
        <taxon>Schizosaccharomycetales</taxon>
        <taxon>Schizosaccharomycetaceae</taxon>
        <taxon>Schizosaccharomyces</taxon>
    </lineage>
</organism>
<reference key="1">
    <citation type="journal article" date="2002" name="Nature">
        <title>The genome sequence of Schizosaccharomyces pombe.</title>
        <authorList>
            <person name="Wood V."/>
            <person name="Gwilliam R."/>
            <person name="Rajandream M.A."/>
            <person name="Lyne M.H."/>
            <person name="Lyne R."/>
            <person name="Stewart A."/>
            <person name="Sgouros J.G."/>
            <person name="Peat N."/>
            <person name="Hayles J."/>
            <person name="Baker S.G."/>
            <person name="Basham D."/>
            <person name="Bowman S."/>
            <person name="Brooks K."/>
            <person name="Brown D."/>
            <person name="Brown S."/>
            <person name="Chillingworth T."/>
            <person name="Churcher C.M."/>
            <person name="Collins M."/>
            <person name="Connor R."/>
            <person name="Cronin A."/>
            <person name="Davis P."/>
            <person name="Feltwell T."/>
            <person name="Fraser A."/>
            <person name="Gentles S."/>
            <person name="Goble A."/>
            <person name="Hamlin N."/>
            <person name="Harris D.E."/>
            <person name="Hidalgo J."/>
            <person name="Hodgson G."/>
            <person name="Holroyd S."/>
            <person name="Hornsby T."/>
            <person name="Howarth S."/>
            <person name="Huckle E.J."/>
            <person name="Hunt S."/>
            <person name="Jagels K."/>
            <person name="James K.D."/>
            <person name="Jones L."/>
            <person name="Jones M."/>
            <person name="Leather S."/>
            <person name="McDonald S."/>
            <person name="McLean J."/>
            <person name="Mooney P."/>
            <person name="Moule S."/>
            <person name="Mungall K.L."/>
            <person name="Murphy L.D."/>
            <person name="Niblett D."/>
            <person name="Odell C."/>
            <person name="Oliver K."/>
            <person name="O'Neil S."/>
            <person name="Pearson D."/>
            <person name="Quail M.A."/>
            <person name="Rabbinowitsch E."/>
            <person name="Rutherford K.M."/>
            <person name="Rutter S."/>
            <person name="Saunders D."/>
            <person name="Seeger K."/>
            <person name="Sharp S."/>
            <person name="Skelton J."/>
            <person name="Simmonds M.N."/>
            <person name="Squares R."/>
            <person name="Squares S."/>
            <person name="Stevens K."/>
            <person name="Taylor K."/>
            <person name="Taylor R.G."/>
            <person name="Tivey A."/>
            <person name="Walsh S.V."/>
            <person name="Warren T."/>
            <person name="Whitehead S."/>
            <person name="Woodward J.R."/>
            <person name="Volckaert G."/>
            <person name="Aert R."/>
            <person name="Robben J."/>
            <person name="Grymonprez B."/>
            <person name="Weltjens I."/>
            <person name="Vanstreels E."/>
            <person name="Rieger M."/>
            <person name="Schaefer M."/>
            <person name="Mueller-Auer S."/>
            <person name="Gabel C."/>
            <person name="Fuchs M."/>
            <person name="Duesterhoeft A."/>
            <person name="Fritzc C."/>
            <person name="Holzer E."/>
            <person name="Moestl D."/>
            <person name="Hilbert H."/>
            <person name="Borzym K."/>
            <person name="Langer I."/>
            <person name="Beck A."/>
            <person name="Lehrach H."/>
            <person name="Reinhardt R."/>
            <person name="Pohl T.M."/>
            <person name="Eger P."/>
            <person name="Zimmermann W."/>
            <person name="Wedler H."/>
            <person name="Wambutt R."/>
            <person name="Purnelle B."/>
            <person name="Goffeau A."/>
            <person name="Cadieu E."/>
            <person name="Dreano S."/>
            <person name="Gloux S."/>
            <person name="Lelaure V."/>
            <person name="Mottier S."/>
            <person name="Galibert F."/>
            <person name="Aves S.J."/>
            <person name="Xiang Z."/>
            <person name="Hunt C."/>
            <person name="Moore K."/>
            <person name="Hurst S.M."/>
            <person name="Lucas M."/>
            <person name="Rochet M."/>
            <person name="Gaillardin C."/>
            <person name="Tallada V.A."/>
            <person name="Garzon A."/>
            <person name="Thode G."/>
            <person name="Daga R.R."/>
            <person name="Cruzado L."/>
            <person name="Jimenez J."/>
            <person name="Sanchez M."/>
            <person name="del Rey F."/>
            <person name="Benito J."/>
            <person name="Dominguez A."/>
            <person name="Revuelta J.L."/>
            <person name="Moreno S."/>
            <person name="Armstrong J."/>
            <person name="Forsburg S.L."/>
            <person name="Cerutti L."/>
            <person name="Lowe T."/>
            <person name="McCombie W.R."/>
            <person name="Paulsen I."/>
            <person name="Potashkin J."/>
            <person name="Shpakovski G.V."/>
            <person name="Ussery D."/>
            <person name="Barrell B.G."/>
            <person name="Nurse P."/>
        </authorList>
    </citation>
    <scope>NUCLEOTIDE SEQUENCE [LARGE SCALE GENOMIC DNA]</scope>
    <source>
        <strain>972 / ATCC 24843</strain>
    </source>
</reference>
<evidence type="ECO:0000250" key="1"/>
<evidence type="ECO:0000255" key="2"/>
<evidence type="ECO:0000255" key="3">
    <source>
        <dbReference type="PROSITE-ProRule" id="PRU00555"/>
    </source>
</evidence>
<evidence type="ECO:0000256" key="4">
    <source>
        <dbReference type="SAM" id="MobiDB-lite"/>
    </source>
</evidence>
<evidence type="ECO:0000305" key="5"/>
<feature type="signal peptide" evidence="2">
    <location>
        <begin position="1"/>
        <end position="19"/>
    </location>
</feature>
<feature type="chain" id="PRO_0000437228" description="Putative lysophospholipase SPBC1348.10c">
    <location>
        <begin position="20"/>
        <end position="673"/>
    </location>
</feature>
<feature type="domain" description="PLA2c" evidence="3">
    <location>
        <begin position="74"/>
        <end position="615"/>
    </location>
</feature>
<feature type="region of interest" description="Disordered" evidence="4">
    <location>
        <begin position="631"/>
        <end position="653"/>
    </location>
</feature>
<feature type="glycosylation site" description="N-linked (GlcNAc...) asparagine" evidence="2">
    <location>
        <position position="72"/>
    </location>
</feature>
<feature type="glycosylation site" description="N-linked (GlcNAc...) asparagine" evidence="2">
    <location>
        <position position="125"/>
    </location>
</feature>
<feature type="glycosylation site" description="N-linked (GlcNAc...) asparagine" evidence="2">
    <location>
        <position position="191"/>
    </location>
</feature>
<feature type="glycosylation site" description="N-linked (GlcNAc...) asparagine" evidence="2">
    <location>
        <position position="194"/>
    </location>
</feature>
<feature type="glycosylation site" description="N-linked (GlcNAc...) asparagine" evidence="2">
    <location>
        <position position="272"/>
    </location>
</feature>
<feature type="glycosylation site" description="N-linked (GlcNAc...) asparagine" evidence="2">
    <location>
        <position position="301"/>
    </location>
</feature>
<feature type="glycosylation site" description="N-linked (GlcNAc...) asparagine" evidence="2">
    <location>
        <position position="374"/>
    </location>
</feature>
<feature type="glycosylation site" description="N-linked (GlcNAc...) asparagine" evidence="2">
    <location>
        <position position="404"/>
    </location>
</feature>
<feature type="glycosylation site" description="N-linked (GlcNAc...) asparagine" evidence="2">
    <location>
        <position position="409"/>
    </location>
</feature>
<feature type="glycosylation site" description="N-linked (GlcNAc...) asparagine" evidence="2">
    <location>
        <position position="481"/>
    </location>
</feature>
<feature type="glycosylation site" description="N-linked (GlcNAc...) asparagine" evidence="2">
    <location>
        <position position="516"/>
    </location>
</feature>
<feature type="glycosylation site" description="N-linked (GlcNAc...) asparagine" evidence="2">
    <location>
        <position position="545"/>
    </location>
</feature>
<feature type="glycosylation site" description="N-linked (GlcNAc...) asparagine" evidence="2">
    <location>
        <position position="574"/>
    </location>
</feature>
<accession>P0CU03</accession>
<accession>P78834</accession>
<accession>Q9P327</accession>
<keyword id="KW-0325">Glycoprotein</keyword>
<keyword id="KW-0378">Hydrolase</keyword>
<keyword id="KW-0442">Lipid degradation</keyword>
<keyword id="KW-0443">Lipid metabolism</keyword>
<keyword id="KW-1185">Reference proteome</keyword>
<keyword id="KW-0964">Secreted</keyword>
<keyword id="KW-0732">Signal</keyword>
<name>PLB7_SCHPO</name>
<comment type="function">
    <text evidence="1">Catalyzes the release of fatty acids from lysophospholipids.</text>
</comment>
<comment type="catalytic activity">
    <reaction>
        <text>a 1-acyl-sn-glycero-3-phosphocholine + H2O = sn-glycerol 3-phosphocholine + a fatty acid + H(+)</text>
        <dbReference type="Rhea" id="RHEA:15177"/>
        <dbReference type="ChEBI" id="CHEBI:15377"/>
        <dbReference type="ChEBI" id="CHEBI:15378"/>
        <dbReference type="ChEBI" id="CHEBI:16870"/>
        <dbReference type="ChEBI" id="CHEBI:28868"/>
        <dbReference type="ChEBI" id="CHEBI:58168"/>
        <dbReference type="EC" id="3.1.1.5"/>
    </reaction>
</comment>
<comment type="subcellular location">
    <subcellularLocation>
        <location evidence="5">Secreted</location>
    </subcellularLocation>
</comment>
<comment type="similarity">
    <text evidence="5">Belongs to the lysophospholipase family.</text>
</comment>
<proteinExistence type="inferred from homology"/>
<protein>
    <recommendedName>
        <fullName>Putative lysophospholipase SPBC1348.10c</fullName>
        <ecNumber>3.1.1.5</ecNumber>
    </recommendedName>
    <alternativeName>
        <fullName>Phospholipase B</fullName>
    </alternativeName>
</protein>
<gene>
    <name type="ORF">SPBC1348.10c</name>
</gene>
<sequence length="673" mass="74596">MYVNYIGLFAFVQISLTLAYPPGRVEISEIYDFEESSSYKGQDIDTSVLYTLSKRKPALVKRSTDASYAPFNVTCSNDNLLRPASEGLNEGEQSYINKRISKVNSELRSFISKTGLNVDLDKVVNSSDGPRLGIAFSGGGLRAMVNGGGAFNAFDSRFESDSPLSGLLQSAMYISGLSGGSWLVGSVAINNFTNITYLRDNVWNLEHSVFAPHGDNVIENLNYYNDLRKEIDQKKHAGFDCSLTDLWGRALSRKLVDAERGGPGITYSSMRNQSWFQNADYPYPIIVADSRLEEETAIPANTSIFEFTAYEFGTWDNGIKAFIPMEYVGTHLLDGVPPDKSCIHNYDNAGFVMGTSATLFNSFLLDWNENVKKNDTYYDILHAILEDLSKHQDDIAPYPNPYQNYTTSNTSVVNAFEPYDTIDLVDGGEDRENIPLWPLLHPQRFVDVVFAIDSTYNDPYGWPLGSSIVATYERVVTFNANKSVDVRGFPYIPDENTIISLGLNTRPTFFGCDGKNTTAGNHDVDNNTPPLLVYFPNYPWTYYSNISTFTMSMDDKMANGILENAFMSTTQNNNESFAVCLACAIIQRSLERKKLSTPTQCSSCFQEYCWDGTLATSTASVYDPTVMSAATTSRAPSGTTSGTASSTTSSSVASATPTHKHWWDSIFEAKENP</sequence>
<dbReference type="EC" id="3.1.1.5"/>
<dbReference type="EMBL" id="CU329671">
    <property type="protein sequence ID" value="CAB94277.1"/>
    <property type="molecule type" value="Genomic_DNA"/>
</dbReference>
<dbReference type="PIR" id="T50281">
    <property type="entry name" value="T50281"/>
</dbReference>
<dbReference type="RefSeq" id="NP_592772.1">
    <property type="nucleotide sequence ID" value="NM_001020935.2"/>
</dbReference>
<dbReference type="SMR" id="P0CU03"/>
<dbReference type="FunCoup" id="P0CU03">
    <property type="interactions" value="202"/>
</dbReference>
<dbReference type="STRING" id="284812.P0CU03"/>
<dbReference type="EnsemblFungi" id="SPAC977.09c.1">
    <property type="protein sequence ID" value="SPAC977.09c.1:pep"/>
    <property type="gene ID" value="SPAC977.09c"/>
</dbReference>
<dbReference type="EnsemblFungi" id="SPBC1348.10c.1">
    <property type="protein sequence ID" value="SPBC1348.10c.1:pep"/>
    <property type="gene ID" value="SPBC1348.10c"/>
</dbReference>
<dbReference type="KEGG" id="spo:2541836"/>
<dbReference type="KEGG" id="spo:5802732"/>
<dbReference type="PomBase" id="SPBC1348.10c"/>
<dbReference type="VEuPathDB" id="FungiDB:SPAC977.09c"/>
<dbReference type="VEuPathDB" id="FungiDB:SPBC1348.10c"/>
<dbReference type="InParanoid" id="P0CU03"/>
<dbReference type="OMA" id="FARYCWN"/>
<dbReference type="PhylomeDB" id="P0CU03"/>
<dbReference type="Reactome" id="R-SPO-111995">
    <property type="pathway name" value="phospho-PLA2 pathway"/>
</dbReference>
<dbReference type="Reactome" id="R-SPO-1482788">
    <property type="pathway name" value="Acyl chain remodelling of PC"/>
</dbReference>
<dbReference type="Reactome" id="R-SPO-1482798">
    <property type="pathway name" value="Acyl chain remodeling of CL"/>
</dbReference>
<dbReference type="Reactome" id="R-SPO-1482801">
    <property type="pathway name" value="Acyl chain remodelling of PS"/>
</dbReference>
<dbReference type="Reactome" id="R-SPO-1482839">
    <property type="pathway name" value="Acyl chain remodelling of PE"/>
</dbReference>
<dbReference type="Reactome" id="R-SPO-1482922">
    <property type="pathway name" value="Acyl chain remodelling of PI"/>
</dbReference>
<dbReference type="Reactome" id="R-SPO-1482925">
    <property type="pathway name" value="Acyl chain remodelling of PG"/>
</dbReference>
<dbReference type="Reactome" id="R-SPO-1483115">
    <property type="pathway name" value="Hydrolysis of LPC"/>
</dbReference>
<dbReference type="Reactome" id="R-SPO-1483152">
    <property type="pathway name" value="Hydrolysis of LPE"/>
</dbReference>
<dbReference type="Reactome" id="R-SPO-1483166">
    <property type="pathway name" value="Synthesis of PA"/>
</dbReference>
<dbReference type="Reactome" id="R-SPO-2142753">
    <property type="pathway name" value="Arachidonate metabolism"/>
</dbReference>
<dbReference type="Reactome" id="R-SPO-418592">
    <property type="pathway name" value="ADP signalling through P2Y purinoceptor 1"/>
</dbReference>
<dbReference type="Reactome" id="R-SPO-432142">
    <property type="pathway name" value="Platelet sensitization by LDL"/>
</dbReference>
<dbReference type="Reactome" id="R-SPO-6811436">
    <property type="pathway name" value="COPI-independent Golgi-to-ER retrograde traffic"/>
</dbReference>
<dbReference type="PRO" id="PR:P0CU03"/>
<dbReference type="Proteomes" id="UP000002485">
    <property type="component" value="Chromosome II"/>
</dbReference>
<dbReference type="GO" id="GO:0005829">
    <property type="term" value="C:cytosol"/>
    <property type="evidence" value="ECO:0000318"/>
    <property type="project" value="GO_Central"/>
</dbReference>
<dbReference type="GO" id="GO:0005783">
    <property type="term" value="C:endoplasmic reticulum"/>
    <property type="evidence" value="ECO:0000318"/>
    <property type="project" value="GO_Central"/>
</dbReference>
<dbReference type="GO" id="GO:0005576">
    <property type="term" value="C:extracellular region"/>
    <property type="evidence" value="ECO:0007669"/>
    <property type="project" value="UniProtKB-SubCell"/>
</dbReference>
<dbReference type="GO" id="GO:0042597">
    <property type="term" value="C:periplasmic space"/>
    <property type="evidence" value="ECO:0000266"/>
    <property type="project" value="PomBase"/>
</dbReference>
<dbReference type="GO" id="GO:0004622">
    <property type="term" value="F:lysophospholipase activity"/>
    <property type="evidence" value="ECO:0007669"/>
    <property type="project" value="UniProtKB-EC"/>
</dbReference>
<dbReference type="GO" id="GO:0004623">
    <property type="term" value="F:phospholipase A2 activity"/>
    <property type="evidence" value="ECO:0000318"/>
    <property type="project" value="GO_Central"/>
</dbReference>
<dbReference type="GO" id="GO:0046475">
    <property type="term" value="P:glycerophospholipid catabolic process"/>
    <property type="evidence" value="ECO:0000318"/>
    <property type="project" value="GO_Central"/>
</dbReference>
<dbReference type="CDD" id="cd07203">
    <property type="entry name" value="cPLA2_Fungal_PLB"/>
    <property type="match status" value="1"/>
</dbReference>
<dbReference type="FunFam" id="3.40.1090.10:FF:000010">
    <property type="entry name" value="Lysophospholipase"/>
    <property type="match status" value="1"/>
</dbReference>
<dbReference type="Gene3D" id="3.40.1090.10">
    <property type="entry name" value="Cytosolic phospholipase A2 catalytic domain"/>
    <property type="match status" value="1"/>
</dbReference>
<dbReference type="InterPro" id="IPR016035">
    <property type="entry name" value="Acyl_Trfase/lysoPLipase"/>
</dbReference>
<dbReference type="InterPro" id="IPR002642">
    <property type="entry name" value="LysoPLipase_cat_dom"/>
</dbReference>
<dbReference type="PANTHER" id="PTHR10728">
    <property type="entry name" value="CYTOSOLIC PHOSPHOLIPASE A2"/>
    <property type="match status" value="1"/>
</dbReference>
<dbReference type="PANTHER" id="PTHR10728:SF33">
    <property type="entry name" value="LYSOPHOSPHOLIPASE 1-RELATED"/>
    <property type="match status" value="1"/>
</dbReference>
<dbReference type="Pfam" id="PF01735">
    <property type="entry name" value="PLA2_B"/>
    <property type="match status" value="1"/>
</dbReference>
<dbReference type="SMART" id="SM00022">
    <property type="entry name" value="PLAc"/>
    <property type="match status" value="1"/>
</dbReference>
<dbReference type="SUPFAM" id="SSF52151">
    <property type="entry name" value="FabD/lysophospholipase-like"/>
    <property type="match status" value="1"/>
</dbReference>
<dbReference type="PROSITE" id="PS51210">
    <property type="entry name" value="PLA2C"/>
    <property type="match status" value="1"/>
</dbReference>